<proteinExistence type="evidence at protein level"/>
<reference evidence="8" key="1">
    <citation type="journal article" date="1998" name="Science">
        <title>Genome sequence of the nematode C. elegans: a platform for investigating biology.</title>
        <authorList>
            <consortium name="The C. elegans sequencing consortium"/>
        </authorList>
    </citation>
    <scope>NUCLEOTIDE SEQUENCE [LARGE SCALE GENOMIC DNA]</scope>
    <source>
        <strain evidence="8">Bristol N2</strain>
    </source>
</reference>
<reference evidence="5" key="2">
    <citation type="journal article" date="2001" name="Eur. J. Biochem.">
        <title>Functional expression and characterization of the cytoplasmic aminopeptidase P of Caenorhabditis elegans.</title>
        <authorList>
            <person name="Laurent V."/>
            <person name="Brooks D.R."/>
            <person name="Coates D."/>
            <person name="Isaac R.E."/>
        </authorList>
    </citation>
    <scope>FUNCTION</scope>
    <scope>CATALYTIC ACTIVITY</scope>
    <scope>ACTIVITY REGULATION</scope>
    <scope>BIOPHYSICOCHEMICAL PROPERTIES</scope>
    <scope>SUBCELLULAR LOCATION</scope>
    <scope>TISSUE SPECIFICITY</scope>
    <scope>DEVELOPMENTAL STAGE</scope>
</reference>
<reference key="3">
    <citation type="journal article" date="2021" name="EMBO J.">
        <title>Intrinsically disordered protein PID-2 modulates Z granules and is required for heritable piRNA-induced silencing in the Caenorhabditis elegans embryo.</title>
        <authorList>
            <person name="Placentino M."/>
            <person name="de Jesus Domingues A.M."/>
            <person name="Schreier J."/>
            <person name="Dietz S."/>
            <person name="Hellmann S."/>
            <person name="de Albuquerque B.F."/>
            <person name="Butter F."/>
            <person name="Ketting R.F."/>
        </authorList>
    </citation>
    <scope>INTERACTION WITH PID-2; PID-4 AND PID-5</scope>
</reference>
<reference evidence="10 11" key="4">
    <citation type="journal article" date="2015" name="FEBS Open Bio">
        <title>Crystal structure of X-prolyl aminopeptidase from Caenorhabditis elegans: A cytosolic enzyme with a di-nuclear active site.</title>
        <authorList>
            <person name="Iyer S."/>
            <person name="La-Borde P.J."/>
            <person name="Payne K.A."/>
            <person name="Parsons M.R."/>
            <person name="Turner A.J."/>
            <person name="Isaac R.E."/>
            <person name="Acharya K.R."/>
        </authorList>
    </citation>
    <scope>X-RAY CRYSTALLOGRAPHY (1.95 ANGSTROMS) ALONE AND IN COMPLEX WITH INHIBITOR APSTATIN</scope>
    <scope>FUNCTION</scope>
    <scope>CATALYTIC ACTIVITY</scope>
    <scope>COFACTOR</scope>
    <scope>ACTIVITY REGULATION</scope>
    <scope>SUBUNIT</scope>
    <scope>ZINC-BINDING SITES</scope>
</reference>
<feature type="chain" id="PRO_0000438731" description="Xaa-Pro aminopeptidase app-1">
    <location>
        <begin position="1"/>
        <end position="616"/>
    </location>
</feature>
<feature type="binding site" evidence="7 11">
    <location>
        <position position="78"/>
    </location>
    <ligand>
        <name>a peptide</name>
        <dbReference type="ChEBI" id="CHEBI:60466"/>
    </ligand>
</feature>
<feature type="binding site" evidence="7 11">
    <location>
        <position position="392"/>
    </location>
    <ligand>
        <name>a peptide</name>
        <dbReference type="ChEBI" id="CHEBI:60466"/>
    </ligand>
</feature>
<feature type="binding site" evidence="2 10 11">
    <location>
        <position position="413"/>
    </location>
    <ligand>
        <name>Zn(2+)</name>
        <dbReference type="ChEBI" id="CHEBI:29105"/>
        <label>1</label>
    </ligand>
</feature>
<feature type="binding site" evidence="2 10 11">
    <location>
        <position position="424"/>
    </location>
    <ligand>
        <name>Zn(2+)</name>
        <dbReference type="ChEBI" id="CHEBI:29105"/>
        <label>1</label>
    </ligand>
</feature>
<feature type="binding site" evidence="2 10 11">
    <location>
        <position position="424"/>
    </location>
    <ligand>
        <name>Zn(2+)</name>
        <dbReference type="ChEBI" id="CHEBI:29105"/>
        <label>2</label>
    </ligand>
</feature>
<feature type="binding site" evidence="7 11">
    <location>
        <position position="487"/>
    </location>
    <ligand>
        <name>a peptide</name>
        <dbReference type="ChEBI" id="CHEBI:60466"/>
    </ligand>
</feature>
<feature type="binding site" evidence="2 10 11">
    <location>
        <position position="487"/>
    </location>
    <ligand>
        <name>Zn(2+)</name>
        <dbReference type="ChEBI" id="CHEBI:29105"/>
        <label>2</label>
    </ligand>
</feature>
<feature type="binding site" evidence="7 11">
    <location>
        <position position="496"/>
    </location>
    <ligand>
        <name>a peptide</name>
        <dbReference type="ChEBI" id="CHEBI:60466"/>
    </ligand>
</feature>
<feature type="binding site" evidence="7 11">
    <location>
        <position position="522"/>
    </location>
    <ligand>
        <name>a peptide</name>
        <dbReference type="ChEBI" id="CHEBI:60466"/>
    </ligand>
</feature>
<feature type="binding site" evidence="2 10 11">
    <location>
        <position position="522"/>
    </location>
    <ligand>
        <name>Zn(2+)</name>
        <dbReference type="ChEBI" id="CHEBI:29105"/>
        <label>2</label>
    </ligand>
</feature>
<feature type="binding site" evidence="2 10 11">
    <location>
        <position position="536"/>
    </location>
    <ligand>
        <name>Zn(2+)</name>
        <dbReference type="ChEBI" id="CHEBI:29105"/>
        <label>1</label>
    </ligand>
</feature>
<feature type="binding site" evidence="2 10 11">
    <location>
        <position position="536"/>
    </location>
    <ligand>
        <name>Zn(2+)</name>
        <dbReference type="ChEBI" id="CHEBI:29105"/>
        <label>2</label>
    </ligand>
</feature>
<feature type="helix" evidence="12">
    <location>
        <begin position="3"/>
        <end position="12"/>
    </location>
</feature>
<feature type="helix" evidence="12">
    <location>
        <begin position="13"/>
        <end position="15"/>
    </location>
</feature>
<feature type="helix" evidence="12">
    <location>
        <begin position="17"/>
        <end position="22"/>
    </location>
</feature>
<feature type="turn" evidence="12">
    <location>
        <begin position="23"/>
        <end position="25"/>
    </location>
</feature>
<feature type="strand" evidence="12">
    <location>
        <begin position="28"/>
        <end position="35"/>
    </location>
</feature>
<feature type="helix" evidence="12">
    <location>
        <begin position="46"/>
        <end position="48"/>
    </location>
</feature>
<feature type="helix" evidence="12">
    <location>
        <begin position="50"/>
        <end position="55"/>
    </location>
</feature>
<feature type="strand" evidence="12">
    <location>
        <begin position="63"/>
        <end position="69"/>
    </location>
</feature>
<feature type="strand" evidence="12">
    <location>
        <begin position="71"/>
        <end position="75"/>
    </location>
</feature>
<feature type="helix" evidence="12">
    <location>
        <begin position="77"/>
        <end position="79"/>
    </location>
</feature>
<feature type="helix" evidence="12">
    <location>
        <begin position="80"/>
        <end position="86"/>
    </location>
</feature>
<feature type="turn" evidence="12">
    <location>
        <begin position="89"/>
        <end position="91"/>
    </location>
</feature>
<feature type="strand" evidence="12">
    <location>
        <begin position="93"/>
        <end position="96"/>
    </location>
</feature>
<feature type="helix" evidence="12">
    <location>
        <begin position="105"/>
        <end position="112"/>
    </location>
</feature>
<feature type="strand" evidence="12">
    <location>
        <begin position="118"/>
        <end position="121"/>
    </location>
</feature>
<feature type="turn" evidence="12">
    <location>
        <begin position="123"/>
        <end position="125"/>
    </location>
</feature>
<feature type="strand" evidence="12">
    <location>
        <begin position="126"/>
        <end position="128"/>
    </location>
</feature>
<feature type="helix" evidence="12">
    <location>
        <begin position="129"/>
        <end position="140"/>
    </location>
</feature>
<feature type="strand" evidence="12">
    <location>
        <begin position="144"/>
        <end position="147"/>
    </location>
</feature>
<feature type="helix" evidence="12">
    <location>
        <begin position="152"/>
        <end position="156"/>
    </location>
</feature>
<feature type="helix" evidence="12">
    <location>
        <begin position="173"/>
        <end position="176"/>
    </location>
</feature>
<feature type="helix" evidence="12">
    <location>
        <begin position="180"/>
        <end position="193"/>
    </location>
</feature>
<feature type="strand" evidence="12">
    <location>
        <begin position="197"/>
        <end position="201"/>
    </location>
</feature>
<feature type="helix" evidence="12">
    <location>
        <begin position="204"/>
        <end position="211"/>
    </location>
</feature>
<feature type="strand" evidence="12">
    <location>
        <begin position="227"/>
        <end position="233"/>
    </location>
</feature>
<feature type="strand" evidence="12">
    <location>
        <begin position="235"/>
        <end position="238"/>
    </location>
</feature>
<feature type="helix" evidence="12">
    <location>
        <begin position="241"/>
        <end position="243"/>
    </location>
</feature>
<feature type="helix" evidence="12">
    <location>
        <begin position="246"/>
        <end position="254"/>
    </location>
</feature>
<feature type="strand" evidence="12">
    <location>
        <begin position="257"/>
        <end position="260"/>
    </location>
</feature>
<feature type="helix" evidence="12">
    <location>
        <begin position="262"/>
        <end position="264"/>
    </location>
</feature>
<feature type="helix" evidence="12">
    <location>
        <begin position="265"/>
        <end position="278"/>
    </location>
</feature>
<feature type="strand" evidence="12">
    <location>
        <begin position="285"/>
        <end position="287"/>
    </location>
</feature>
<feature type="helix" evidence="12">
    <location>
        <begin position="293"/>
        <end position="299"/>
    </location>
</feature>
<feature type="helix" evidence="12">
    <location>
        <begin position="301"/>
        <end position="303"/>
    </location>
</feature>
<feature type="strand" evidence="12">
    <location>
        <begin position="304"/>
        <end position="306"/>
    </location>
</feature>
<feature type="helix" evidence="12">
    <location>
        <begin position="310"/>
        <end position="316"/>
    </location>
</feature>
<feature type="helix" evidence="12">
    <location>
        <begin position="320"/>
        <end position="349"/>
    </location>
</feature>
<feature type="helix" evidence="12">
    <location>
        <begin position="356"/>
        <end position="368"/>
    </location>
</feature>
<feature type="strand" evidence="12">
    <location>
        <begin position="373"/>
        <end position="378"/>
    </location>
</feature>
<feature type="strand" evidence="12">
    <location>
        <begin position="381"/>
        <end position="384"/>
    </location>
</feature>
<feature type="helix" evidence="12">
    <location>
        <begin position="385"/>
        <end position="389"/>
    </location>
</feature>
<feature type="helix" evidence="12">
    <location>
        <begin position="399"/>
        <end position="401"/>
    </location>
</feature>
<feature type="strand" evidence="12">
    <location>
        <begin position="410"/>
        <end position="414"/>
    </location>
</feature>
<feature type="strand" evidence="12">
    <location>
        <begin position="416"/>
        <end position="418"/>
    </location>
</feature>
<feature type="strand" evidence="12">
    <location>
        <begin position="425"/>
        <end position="429"/>
    </location>
</feature>
<feature type="helix" evidence="12">
    <location>
        <begin position="436"/>
        <end position="453"/>
    </location>
</feature>
<feature type="helix" evidence="12">
    <location>
        <begin position="463"/>
        <end position="470"/>
    </location>
</feature>
<feature type="helix" evidence="12">
    <location>
        <begin position="472"/>
        <end position="475"/>
    </location>
</feature>
<feature type="turn" evidence="12">
    <location>
        <begin position="476"/>
        <end position="478"/>
    </location>
</feature>
<feature type="strand" evidence="12">
    <location>
        <begin position="485"/>
        <end position="488"/>
    </location>
</feature>
<feature type="strand" evidence="12">
    <location>
        <begin position="491"/>
        <end position="493"/>
    </location>
</feature>
<feature type="strand" evidence="12">
    <location>
        <begin position="501"/>
        <end position="503"/>
    </location>
</feature>
<feature type="strand" evidence="12">
    <location>
        <begin position="518"/>
        <end position="521"/>
    </location>
</feature>
<feature type="strand" evidence="12">
    <location>
        <begin position="524"/>
        <end position="527"/>
    </location>
</feature>
<feature type="turn" evidence="12">
    <location>
        <begin position="528"/>
        <end position="530"/>
    </location>
</feature>
<feature type="strand" evidence="12">
    <location>
        <begin position="531"/>
        <end position="534"/>
    </location>
</feature>
<feature type="strand" evidence="12">
    <location>
        <begin position="536"/>
        <end position="543"/>
    </location>
</feature>
<feature type="strand" evidence="12">
    <location>
        <begin position="553"/>
        <end position="559"/>
    </location>
</feature>
<feature type="helix" evidence="12">
    <location>
        <begin position="571"/>
        <end position="573"/>
    </location>
</feature>
<feature type="helix" evidence="12">
    <location>
        <begin position="576"/>
        <end position="599"/>
    </location>
</feature>
<feature type="helix" evidence="12">
    <location>
        <begin position="603"/>
        <end position="612"/>
    </location>
</feature>
<name>XPP_CAEEL</name>
<organism evidence="8">
    <name type="scientific">Caenorhabditis elegans</name>
    <dbReference type="NCBI Taxonomy" id="6239"/>
    <lineage>
        <taxon>Eukaryota</taxon>
        <taxon>Metazoa</taxon>
        <taxon>Ecdysozoa</taxon>
        <taxon>Nematoda</taxon>
        <taxon>Chromadorea</taxon>
        <taxon>Rhabditida</taxon>
        <taxon>Rhabditina</taxon>
        <taxon>Rhabditomorpha</taxon>
        <taxon>Rhabditoidea</taxon>
        <taxon>Rhabditidae</taxon>
        <taxon>Peloderinae</taxon>
        <taxon>Caenorhabditis</taxon>
    </lineage>
</organism>
<sequence>MTALEKLAKLRSLFHSERVLALTSSKPMVAYLLPSTDAHHSEYLADYDFRVKFLSGFSGSNAYVVVTDREALLWTDGRYFTQAGNQLDSNSWKLMKQGQPDSITVVDWLVRELERGSVIGFDPTLSTFDAGSKTFKRLKAAGLQPVSIPGNLVDEFWTDRPRLAGEPVVVLDVEDTGLTTSKKVENLREKLKQKKCDAAVFTLLDDVMWLLNIRGSDIPYNPLAYSYLFVAMREIHVFIDNEKLDEKSRAHFHKSNVSIHPYGEVYSWISNWLKAKEASKEPHMVYLTPETNYAIGSIIGEENSMVDTSLVQTAKATKNDHEMQGMRNSHLRDSAALVEFLCWLEKELLSGKRYTEIELADKIDHLRSLQDKYVTLSFDTISAVGDHAALPHYKPLGESGNRKAAANQVFLLDSGAHYGDGTTDVTRTVWYTNPPKEFILHNTLVLKGHINLARAKFPDGIYGSRLDTLTRDALWKLGLDFEHGTGHGVGHYLNVHEGPIGIGHRSVPTGGELHASQVLTIEPGFYAKEKYGIRIENCYETVEAVVMSKAQNFLTFKSLTLVPIQTSIVDKSLLIEEEINWLNQYHARVLKEVGEHLQKRGKTDELKWLAEACKPI</sequence>
<protein>
    <recommendedName>
        <fullName evidence="6">Xaa-Pro aminopeptidase app-1</fullName>
        <ecNumber evidence="1">3.4.11.9</ecNumber>
    </recommendedName>
    <alternativeName>
        <fullName evidence="4">Aminopeptidase P</fullName>
    </alternativeName>
</protein>
<dbReference type="EC" id="3.4.11.9" evidence="1"/>
<dbReference type="EMBL" id="BX284601">
    <property type="protein sequence ID" value="CCD70128.1"/>
    <property type="molecule type" value="Genomic_DNA"/>
</dbReference>
<dbReference type="PIR" id="T32753">
    <property type="entry name" value="T32753"/>
</dbReference>
<dbReference type="RefSeq" id="NP_491489.1">
    <property type="nucleotide sequence ID" value="NM_059088.8"/>
</dbReference>
<dbReference type="PDB" id="4S2R">
    <property type="method" value="X-ray"/>
    <property type="resolution" value="1.95 A"/>
    <property type="chains" value="P/Q=1-616"/>
</dbReference>
<dbReference type="PDB" id="4S2T">
    <property type="method" value="X-ray"/>
    <property type="resolution" value="2.15 A"/>
    <property type="chains" value="P/Q=1-616"/>
</dbReference>
<dbReference type="PDBsum" id="4S2R"/>
<dbReference type="PDBsum" id="4S2T"/>
<dbReference type="SMR" id="O44750"/>
<dbReference type="DIP" id="DIP-26588N"/>
<dbReference type="FunCoup" id="O44750">
    <property type="interactions" value="3106"/>
</dbReference>
<dbReference type="STRING" id="6239.W03G9.4.1"/>
<dbReference type="MEROPS" id="M24.032"/>
<dbReference type="PaxDb" id="6239-W03G9.4.1"/>
<dbReference type="PeptideAtlas" id="O44750"/>
<dbReference type="EnsemblMetazoa" id="W03G9.4.1">
    <property type="protein sequence ID" value="W03G9.4.1"/>
    <property type="gene ID" value="WBGene00000155"/>
</dbReference>
<dbReference type="GeneID" id="172118"/>
<dbReference type="KEGG" id="cel:CELE_W03G9.4"/>
<dbReference type="UCSC" id="W03G9.4.1">
    <property type="organism name" value="c. elegans"/>
</dbReference>
<dbReference type="AGR" id="WB:WBGene00000155"/>
<dbReference type="CTD" id="172118"/>
<dbReference type="WormBase" id="W03G9.4">
    <property type="protein sequence ID" value="CE14560"/>
    <property type="gene ID" value="WBGene00000155"/>
    <property type="gene designation" value="app-1"/>
</dbReference>
<dbReference type="eggNOG" id="KOG2413">
    <property type="taxonomic scope" value="Eukaryota"/>
</dbReference>
<dbReference type="GeneTree" id="ENSGT00970000196568"/>
<dbReference type="HOGENOM" id="CLU_011781_2_1_1"/>
<dbReference type="InParanoid" id="O44750"/>
<dbReference type="OMA" id="EPGMILS"/>
<dbReference type="OrthoDB" id="9995434at2759"/>
<dbReference type="PhylomeDB" id="O44750"/>
<dbReference type="BRENDA" id="3.4.11.9">
    <property type="organism ID" value="1045"/>
</dbReference>
<dbReference type="EvolutionaryTrace" id="O44750"/>
<dbReference type="PRO" id="PR:O44750"/>
<dbReference type="Proteomes" id="UP000001940">
    <property type="component" value="Chromosome I"/>
</dbReference>
<dbReference type="Bgee" id="WBGene00000155">
    <property type="expression patterns" value="Expressed in germ line (C elegans) and 4 other cell types or tissues"/>
</dbReference>
<dbReference type="GO" id="GO:0005737">
    <property type="term" value="C:cytoplasm"/>
    <property type="evidence" value="ECO:0000314"/>
    <property type="project" value="UniProtKB"/>
</dbReference>
<dbReference type="GO" id="GO:0070006">
    <property type="term" value="F:metalloaminopeptidase activity"/>
    <property type="evidence" value="ECO:0000314"/>
    <property type="project" value="UniProtKB"/>
</dbReference>
<dbReference type="GO" id="GO:0042803">
    <property type="term" value="F:protein homodimerization activity"/>
    <property type="evidence" value="ECO:0000353"/>
    <property type="project" value="UniProtKB"/>
</dbReference>
<dbReference type="GO" id="GO:0008270">
    <property type="term" value="F:zinc ion binding"/>
    <property type="evidence" value="ECO:0000314"/>
    <property type="project" value="UniProtKB"/>
</dbReference>
<dbReference type="GO" id="GO:0006508">
    <property type="term" value="P:proteolysis"/>
    <property type="evidence" value="ECO:0000314"/>
    <property type="project" value="UniProtKB"/>
</dbReference>
<dbReference type="GO" id="GO:0051603">
    <property type="term" value="P:proteolysis involved in protein catabolic process"/>
    <property type="evidence" value="ECO:0000314"/>
    <property type="project" value="WormBase"/>
</dbReference>
<dbReference type="CDD" id="cd01085">
    <property type="entry name" value="APP"/>
    <property type="match status" value="1"/>
</dbReference>
<dbReference type="FunFam" id="3.90.230.10:FF:000009">
    <property type="entry name" value="xaa-Pro aminopeptidase 2"/>
    <property type="match status" value="1"/>
</dbReference>
<dbReference type="FunFam" id="3.40.350.10:FF:000015">
    <property type="entry name" value="Xaa-Pro aminopeptidase app-1"/>
    <property type="match status" value="1"/>
</dbReference>
<dbReference type="FunFam" id="3.40.350.10:FF:000030">
    <property type="entry name" value="Xaa-Pro aminopeptidase app-1"/>
    <property type="match status" value="1"/>
</dbReference>
<dbReference type="Gene3D" id="3.90.230.10">
    <property type="entry name" value="Creatinase/methionine aminopeptidase superfamily"/>
    <property type="match status" value="1"/>
</dbReference>
<dbReference type="Gene3D" id="3.40.350.10">
    <property type="entry name" value="Creatinase/prolidase N-terminal domain"/>
    <property type="match status" value="2"/>
</dbReference>
<dbReference type="InterPro" id="IPR029149">
    <property type="entry name" value="Creatin/AminoP/Spt16_N"/>
</dbReference>
<dbReference type="InterPro" id="IPR036005">
    <property type="entry name" value="Creatinase/aminopeptidase-like"/>
</dbReference>
<dbReference type="InterPro" id="IPR000587">
    <property type="entry name" value="Creatinase_N"/>
</dbReference>
<dbReference type="InterPro" id="IPR000994">
    <property type="entry name" value="Pept_M24"/>
</dbReference>
<dbReference type="InterPro" id="IPR033740">
    <property type="entry name" value="Pept_M24B"/>
</dbReference>
<dbReference type="InterPro" id="IPR032416">
    <property type="entry name" value="Peptidase_M24_C"/>
</dbReference>
<dbReference type="InterPro" id="IPR050422">
    <property type="entry name" value="X-Pro_aminopeptidase_P"/>
</dbReference>
<dbReference type="PANTHER" id="PTHR43763">
    <property type="entry name" value="XAA-PRO AMINOPEPTIDASE 1"/>
    <property type="match status" value="1"/>
</dbReference>
<dbReference type="PANTHER" id="PTHR43763:SF6">
    <property type="entry name" value="XAA-PRO AMINOPEPTIDASE 1"/>
    <property type="match status" value="1"/>
</dbReference>
<dbReference type="Pfam" id="PF01321">
    <property type="entry name" value="Creatinase_N"/>
    <property type="match status" value="1"/>
</dbReference>
<dbReference type="Pfam" id="PF16189">
    <property type="entry name" value="Creatinase_N_2"/>
    <property type="match status" value="1"/>
</dbReference>
<dbReference type="Pfam" id="PF00557">
    <property type="entry name" value="Peptidase_M24"/>
    <property type="match status" value="1"/>
</dbReference>
<dbReference type="Pfam" id="PF16188">
    <property type="entry name" value="Peptidase_M24_C"/>
    <property type="match status" value="1"/>
</dbReference>
<dbReference type="SUPFAM" id="SSF55920">
    <property type="entry name" value="Creatinase/aminopeptidase"/>
    <property type="match status" value="1"/>
</dbReference>
<dbReference type="SUPFAM" id="SSF53092">
    <property type="entry name" value="Creatinase/prolidase N-terminal domain"/>
    <property type="match status" value="1"/>
</dbReference>
<comment type="function">
    <text evidence="1 2">Catalyzes the removal of a penultimate prolyl residue from the N-termini of peptides, such as Arg-Pro-Pro (PubMed:11606206, PubMed:25905034). Has activity towards the flp-9 neuropeptide KPSFVRF-amide (PubMed:11606206).</text>
</comment>
<comment type="catalytic activity">
    <reaction evidence="1">
        <text>Release of any N-terminal amino acid, including proline, that is linked to proline, even from a dipeptide or tripeptide.</text>
        <dbReference type="EC" id="3.4.11.9"/>
    </reaction>
</comment>
<comment type="cofactor">
    <cofactor evidence="2">
        <name>Zn(2+)</name>
        <dbReference type="ChEBI" id="CHEBI:29105"/>
    </cofactor>
    <text evidence="2">Binds 2 Zn(2+) ions per subunit.</text>
</comment>
<comment type="activity regulation">
    <text evidence="1 2">Strongly inhibited by the metal ion chelators EDTA and 1,10-phenanthroline (PubMed:11606206). Also inhibited by apstatin (PubMed:11606206, PubMed:25905034). Activity towards bradykinin is inhibited by Mn(2+) and Zn(2+) at all concentrations tested, whereas Co(2+) is inhibitory at concentrations above 100 uM and activatory at 10 uM (PubMed:11606206).</text>
</comment>
<comment type="biophysicochemical properties">
    <kinetics>
        <KM evidence="1">45 uM for bradykinin</KM>
    </kinetics>
    <phDependence>
        <text evidence="1">Optimum pH is 7-8.</text>
    </phDependence>
</comment>
<comment type="subunit">
    <text evidence="2 3">Homodimer (PubMed:25905034). May interact with pid-2, pid-4 and pid-5 (PubMed:33231880).</text>
</comment>
<comment type="subcellular location">
    <subcellularLocation>
        <location evidence="1">Cytoplasm</location>
    </subcellularLocation>
</comment>
<comment type="tissue specificity">
    <text evidence="1">Specifically expressed in the intestine.</text>
</comment>
<comment type="developmental stage">
    <text evidence="1">Expressed in intestine from larval stage L2 onwards. Not detected in embryos.</text>
</comment>
<comment type="similarity">
    <text evidence="5">Belongs to the peptidase M24B family.</text>
</comment>
<gene>
    <name evidence="4" type="primary">app-1</name>
    <name evidence="9" type="ORF">W03G9.4</name>
</gene>
<accession>O44750</accession>
<evidence type="ECO:0000269" key="1">
    <source>
    </source>
</evidence>
<evidence type="ECO:0000269" key="2">
    <source>
    </source>
</evidence>
<evidence type="ECO:0000269" key="3">
    <source>
    </source>
</evidence>
<evidence type="ECO:0000303" key="4">
    <source>
    </source>
</evidence>
<evidence type="ECO:0000305" key="5"/>
<evidence type="ECO:0000305" key="6">
    <source>
    </source>
</evidence>
<evidence type="ECO:0000305" key="7">
    <source>
    </source>
</evidence>
<evidence type="ECO:0000312" key="8">
    <source>
        <dbReference type="Proteomes" id="UP000001940"/>
    </source>
</evidence>
<evidence type="ECO:0000312" key="9">
    <source>
        <dbReference type="WormBase" id="W03G9.4"/>
    </source>
</evidence>
<evidence type="ECO:0007744" key="10">
    <source>
        <dbReference type="PDB" id="4S2R"/>
    </source>
</evidence>
<evidence type="ECO:0007744" key="11">
    <source>
        <dbReference type="PDB" id="4S2T"/>
    </source>
</evidence>
<evidence type="ECO:0007829" key="12">
    <source>
        <dbReference type="PDB" id="4S2R"/>
    </source>
</evidence>
<keyword id="KW-0002">3D-structure</keyword>
<keyword id="KW-0031">Aminopeptidase</keyword>
<keyword id="KW-0963">Cytoplasm</keyword>
<keyword id="KW-0378">Hydrolase</keyword>
<keyword id="KW-0479">Metal-binding</keyword>
<keyword id="KW-0645">Protease</keyword>
<keyword id="KW-1185">Reference proteome</keyword>
<keyword id="KW-0862">Zinc</keyword>